<accession>C4ZYA3</accession>
<dbReference type="EC" id="2.7.1.170" evidence="1"/>
<dbReference type="EMBL" id="CP001396">
    <property type="protein sequence ID" value="ACR62312.1"/>
    <property type="molecule type" value="Genomic_DNA"/>
</dbReference>
<dbReference type="RefSeq" id="WP_000835039.1">
    <property type="nucleotide sequence ID" value="NC_012759.1"/>
</dbReference>
<dbReference type="SMR" id="C4ZYA3"/>
<dbReference type="KEGG" id="ebw:BWG_1455"/>
<dbReference type="HOGENOM" id="CLU_038782_0_0_6"/>
<dbReference type="UniPathway" id="UPA00343"/>
<dbReference type="UniPathway" id="UPA00544"/>
<dbReference type="GO" id="GO:0005524">
    <property type="term" value="F:ATP binding"/>
    <property type="evidence" value="ECO:0007669"/>
    <property type="project" value="UniProtKB-UniRule"/>
</dbReference>
<dbReference type="GO" id="GO:0016301">
    <property type="term" value="F:kinase activity"/>
    <property type="evidence" value="ECO:0007669"/>
    <property type="project" value="UniProtKB-KW"/>
</dbReference>
<dbReference type="GO" id="GO:0016773">
    <property type="term" value="F:phosphotransferase activity, alcohol group as acceptor"/>
    <property type="evidence" value="ECO:0007669"/>
    <property type="project" value="UniProtKB-UniRule"/>
</dbReference>
<dbReference type="GO" id="GO:0097175">
    <property type="term" value="P:1,6-anhydro-N-acetyl-beta-muramic acid catabolic process"/>
    <property type="evidence" value="ECO:0007669"/>
    <property type="project" value="UniProtKB-UniRule"/>
</dbReference>
<dbReference type="GO" id="GO:0006040">
    <property type="term" value="P:amino sugar metabolic process"/>
    <property type="evidence" value="ECO:0007669"/>
    <property type="project" value="InterPro"/>
</dbReference>
<dbReference type="GO" id="GO:0009254">
    <property type="term" value="P:peptidoglycan turnover"/>
    <property type="evidence" value="ECO:0007669"/>
    <property type="project" value="UniProtKB-UniRule"/>
</dbReference>
<dbReference type="CDD" id="cd24050">
    <property type="entry name" value="ASKHA_NBD_ANMK"/>
    <property type="match status" value="1"/>
</dbReference>
<dbReference type="FunFam" id="3.30.420.40:FF:000090">
    <property type="entry name" value="Anhydro-N-acetylmuramic acid kinase"/>
    <property type="match status" value="1"/>
</dbReference>
<dbReference type="Gene3D" id="3.30.420.40">
    <property type="match status" value="2"/>
</dbReference>
<dbReference type="HAMAP" id="MF_01270">
    <property type="entry name" value="AnhMurNAc_kinase"/>
    <property type="match status" value="1"/>
</dbReference>
<dbReference type="InterPro" id="IPR005338">
    <property type="entry name" value="Anhydro_N_Ac-Mur_kinase"/>
</dbReference>
<dbReference type="InterPro" id="IPR043129">
    <property type="entry name" value="ATPase_NBD"/>
</dbReference>
<dbReference type="NCBIfam" id="NF007138">
    <property type="entry name" value="PRK09585.1-1"/>
    <property type="match status" value="1"/>
</dbReference>
<dbReference type="NCBIfam" id="NF007139">
    <property type="entry name" value="PRK09585.1-3"/>
    <property type="match status" value="1"/>
</dbReference>
<dbReference type="NCBIfam" id="NF007148">
    <property type="entry name" value="PRK09585.3-2"/>
    <property type="match status" value="1"/>
</dbReference>
<dbReference type="PANTHER" id="PTHR30605">
    <property type="entry name" value="ANHYDRO-N-ACETYLMURAMIC ACID KINASE"/>
    <property type="match status" value="1"/>
</dbReference>
<dbReference type="PANTHER" id="PTHR30605:SF0">
    <property type="entry name" value="ANHYDRO-N-ACETYLMURAMIC ACID KINASE"/>
    <property type="match status" value="1"/>
</dbReference>
<dbReference type="Pfam" id="PF03702">
    <property type="entry name" value="AnmK"/>
    <property type="match status" value="1"/>
</dbReference>
<dbReference type="SUPFAM" id="SSF53067">
    <property type="entry name" value="Actin-like ATPase domain"/>
    <property type="match status" value="1"/>
</dbReference>
<sequence>MKSGRFIGVMSGTSLDGVDVVLATIDEHRVAQLASLSWPIPVSLKQAVLDICQGQQLTLSQFGQLDTQLGQLFADAVNALLKEQNLQARDIVAIGCHGQTVWHEPTGVAPHTLQIGDNNQIVARTGITVVGDFRRRDIALGGQGAPLVPAFHHALLAHPTERRMVLNIGGIANLSLLIPGQPVGGYDTGPGNMLMDAWIWRQAGKPYDKDAEWARAGKVILPLLQNMLSDPYFSQPAPKSTGREYFNYGWLERHLRHFPGVDPRDVQATLAELTAVTISEQVLLSGGCERLMVCGGGSRNPLLMARLAALLPGTEVTTTDAVGISGDDMEALAFAWLAWRTLAGLPGNLPSVTGASQETVLGAIFPANP</sequence>
<evidence type="ECO:0000255" key="1">
    <source>
        <dbReference type="HAMAP-Rule" id="MF_01270"/>
    </source>
</evidence>
<proteinExistence type="inferred from homology"/>
<keyword id="KW-0067">ATP-binding</keyword>
<keyword id="KW-0119">Carbohydrate metabolism</keyword>
<keyword id="KW-0418">Kinase</keyword>
<keyword id="KW-0547">Nucleotide-binding</keyword>
<keyword id="KW-0808">Transferase</keyword>
<gene>
    <name evidence="1" type="primary">anmK</name>
    <name type="ordered locus">BWG_1455</name>
</gene>
<organism>
    <name type="scientific">Escherichia coli (strain K12 / MC4100 / BW2952)</name>
    <dbReference type="NCBI Taxonomy" id="595496"/>
    <lineage>
        <taxon>Bacteria</taxon>
        <taxon>Pseudomonadati</taxon>
        <taxon>Pseudomonadota</taxon>
        <taxon>Gammaproteobacteria</taxon>
        <taxon>Enterobacterales</taxon>
        <taxon>Enterobacteriaceae</taxon>
        <taxon>Escherichia</taxon>
    </lineage>
</organism>
<feature type="chain" id="PRO_1000214166" description="Anhydro-N-acetylmuramic acid kinase">
    <location>
        <begin position="1"/>
        <end position="369"/>
    </location>
</feature>
<feature type="binding site" evidence="1">
    <location>
        <begin position="12"/>
        <end position="19"/>
    </location>
    <ligand>
        <name>ATP</name>
        <dbReference type="ChEBI" id="CHEBI:30616"/>
    </ligand>
</feature>
<protein>
    <recommendedName>
        <fullName evidence="1">Anhydro-N-acetylmuramic acid kinase</fullName>
        <ecNumber evidence="1">2.7.1.170</ecNumber>
    </recommendedName>
    <alternativeName>
        <fullName evidence="1">AnhMurNAc kinase</fullName>
    </alternativeName>
</protein>
<name>ANMK_ECOBW</name>
<reference key="1">
    <citation type="journal article" date="2009" name="J. Bacteriol.">
        <title>Genomic sequencing reveals regulatory mutations and recombinational events in the widely used MC4100 lineage of Escherichia coli K-12.</title>
        <authorList>
            <person name="Ferenci T."/>
            <person name="Zhou Z."/>
            <person name="Betteridge T."/>
            <person name="Ren Y."/>
            <person name="Liu Y."/>
            <person name="Feng L."/>
            <person name="Reeves P.R."/>
            <person name="Wang L."/>
        </authorList>
    </citation>
    <scope>NUCLEOTIDE SEQUENCE [LARGE SCALE GENOMIC DNA]</scope>
    <source>
        <strain>K12 / MC4100 / BW2952</strain>
    </source>
</reference>
<comment type="function">
    <text evidence="1">Catalyzes the specific phosphorylation of 1,6-anhydro-N-acetylmuramic acid (anhMurNAc) with the simultaneous cleavage of the 1,6-anhydro ring, generating MurNAc-6-P. Is required for the utilization of anhMurNAc either imported from the medium or derived from its own cell wall murein, and thus plays a role in cell wall recycling.</text>
</comment>
<comment type="catalytic activity">
    <reaction evidence="1">
        <text>1,6-anhydro-N-acetyl-beta-muramate + ATP + H2O = N-acetyl-D-muramate 6-phosphate + ADP + H(+)</text>
        <dbReference type="Rhea" id="RHEA:24952"/>
        <dbReference type="ChEBI" id="CHEBI:15377"/>
        <dbReference type="ChEBI" id="CHEBI:15378"/>
        <dbReference type="ChEBI" id="CHEBI:30616"/>
        <dbReference type="ChEBI" id="CHEBI:58690"/>
        <dbReference type="ChEBI" id="CHEBI:58722"/>
        <dbReference type="ChEBI" id="CHEBI:456216"/>
        <dbReference type="EC" id="2.7.1.170"/>
    </reaction>
</comment>
<comment type="pathway">
    <text evidence="1">Amino-sugar metabolism; 1,6-anhydro-N-acetylmuramate degradation.</text>
</comment>
<comment type="pathway">
    <text evidence="1">Cell wall biogenesis; peptidoglycan recycling.</text>
</comment>
<comment type="similarity">
    <text evidence="1">Belongs to the anhydro-N-acetylmuramic acid kinase family.</text>
</comment>